<feature type="chain" id="PRO_1000138156" description="Cell division inhibitor SulA">
    <location>
        <begin position="1"/>
        <end position="169"/>
    </location>
</feature>
<feature type="region of interest" description="FtsZ binding" evidence="1">
    <location>
        <begin position="106"/>
        <end position="112"/>
    </location>
</feature>
<feature type="region of interest" description="Lon protease binding" evidence="1">
    <location>
        <begin position="162"/>
        <end position="169"/>
    </location>
</feature>
<feature type="site" description="Essential for degradation by Lon protease" evidence="1">
    <location>
        <position position="169"/>
    </location>
</feature>
<proteinExistence type="inferred from homology"/>
<evidence type="ECO:0000255" key="1">
    <source>
        <dbReference type="HAMAP-Rule" id="MF_01179"/>
    </source>
</evidence>
<gene>
    <name evidence="1" type="primary">sulA</name>
    <name type="ordered locus">ECH74115_1122</name>
</gene>
<keyword id="KW-0131">Cell cycle</keyword>
<keyword id="KW-0132">Cell division</keyword>
<keyword id="KW-0227">DNA damage</keyword>
<keyword id="KW-0717">Septation</keyword>
<keyword id="KW-0742">SOS response</keyword>
<protein>
    <recommendedName>
        <fullName evidence="1">Cell division inhibitor SulA</fullName>
    </recommendedName>
</protein>
<organism>
    <name type="scientific">Escherichia coli O157:H7 (strain EC4115 / EHEC)</name>
    <dbReference type="NCBI Taxonomy" id="444450"/>
    <lineage>
        <taxon>Bacteria</taxon>
        <taxon>Pseudomonadati</taxon>
        <taxon>Pseudomonadota</taxon>
        <taxon>Gammaproteobacteria</taxon>
        <taxon>Enterobacterales</taxon>
        <taxon>Enterobacteriaceae</taxon>
        <taxon>Escherichia</taxon>
    </lineage>
</organism>
<dbReference type="EMBL" id="CP001164">
    <property type="protein sequence ID" value="ACI38217.1"/>
    <property type="molecule type" value="Genomic_DNA"/>
</dbReference>
<dbReference type="RefSeq" id="WP_000288710.1">
    <property type="nucleotide sequence ID" value="NC_011353.1"/>
</dbReference>
<dbReference type="SMR" id="B5YT88"/>
<dbReference type="GeneID" id="93776456"/>
<dbReference type="KEGG" id="ecf:ECH74115_1122"/>
<dbReference type="HOGENOM" id="CLU_118972_1_0_6"/>
<dbReference type="GO" id="GO:0000917">
    <property type="term" value="P:division septum assembly"/>
    <property type="evidence" value="ECO:0007669"/>
    <property type="project" value="UniProtKB-KW"/>
</dbReference>
<dbReference type="GO" id="GO:0006281">
    <property type="term" value="P:DNA repair"/>
    <property type="evidence" value="ECO:0007669"/>
    <property type="project" value="TreeGrafter"/>
</dbReference>
<dbReference type="GO" id="GO:0051782">
    <property type="term" value="P:negative regulation of cell division"/>
    <property type="evidence" value="ECO:0007669"/>
    <property type="project" value="UniProtKB-UniRule"/>
</dbReference>
<dbReference type="GO" id="GO:0009432">
    <property type="term" value="P:SOS response"/>
    <property type="evidence" value="ECO:0007669"/>
    <property type="project" value="UniProtKB-UniRule"/>
</dbReference>
<dbReference type="FunFam" id="3.40.50.300:FF:000417">
    <property type="entry name" value="Cell division inhibitor SulA"/>
    <property type="match status" value="1"/>
</dbReference>
<dbReference type="Gene3D" id="3.40.50.300">
    <property type="entry name" value="P-loop containing nucleotide triphosphate hydrolases"/>
    <property type="match status" value="1"/>
</dbReference>
<dbReference type="HAMAP" id="MF_01179">
    <property type="entry name" value="SulA"/>
    <property type="match status" value="1"/>
</dbReference>
<dbReference type="InterPro" id="IPR004596">
    <property type="entry name" value="Cell_div_suppressor_SulA"/>
</dbReference>
<dbReference type="InterPro" id="IPR027417">
    <property type="entry name" value="P-loop_NTPase"/>
</dbReference>
<dbReference type="InterPro" id="IPR050356">
    <property type="entry name" value="SulA_CellDiv_inhibitor"/>
</dbReference>
<dbReference type="InterPro" id="IPR047696">
    <property type="entry name" value="SulA_enterobact"/>
</dbReference>
<dbReference type="NCBIfam" id="NF007892">
    <property type="entry name" value="PRK10595.1"/>
    <property type="match status" value="1"/>
</dbReference>
<dbReference type="NCBIfam" id="TIGR00623">
    <property type="entry name" value="SOS_SulA_coli"/>
    <property type="match status" value="1"/>
</dbReference>
<dbReference type="PANTHER" id="PTHR35369">
    <property type="entry name" value="BLR3025 PROTEIN-RELATED"/>
    <property type="match status" value="1"/>
</dbReference>
<dbReference type="PANTHER" id="PTHR35369:SF4">
    <property type="entry name" value="CELL DIVISION INHIBITOR SULA"/>
    <property type="match status" value="1"/>
</dbReference>
<dbReference type="Pfam" id="PF03846">
    <property type="entry name" value="SulA"/>
    <property type="match status" value="1"/>
</dbReference>
<dbReference type="PIRSF" id="PIRSF003093">
    <property type="entry name" value="SulA"/>
    <property type="match status" value="1"/>
</dbReference>
<dbReference type="SUPFAM" id="SSF52540">
    <property type="entry name" value="P-loop containing nucleoside triphosphate hydrolases"/>
    <property type="match status" value="1"/>
</dbReference>
<comment type="function">
    <text evidence="1">Component of the SOS system and an inhibitor of cell division. Accumulation of SulA causes rapid cessation of cell division and the appearance of long, non-septate filaments. In the presence of GTP, binds a polymerization-competent form of FtsZ in a 1:1 ratio, thus inhibiting FtsZ polymerization and therefore preventing it from participating in the assembly of the Z ring. This mechanism prevents the premature segregation of damaged DNA to daughter cells during cell division.</text>
</comment>
<comment type="subunit">
    <text evidence="1">Interacts with FtsZ.</text>
</comment>
<comment type="induction">
    <text evidence="1">By DNA damage, as part of the SOS response.</text>
</comment>
<comment type="PTM">
    <text evidence="1">Is rapidly cleaved and degraded by the Lon protease once DNA damage is repaired.</text>
</comment>
<comment type="similarity">
    <text evidence="1">Belongs to the SulA family.</text>
</comment>
<accession>B5YT88</accession>
<reference key="1">
    <citation type="journal article" date="2011" name="Proc. Natl. Acad. Sci. U.S.A.">
        <title>Genomic anatomy of Escherichia coli O157:H7 outbreaks.</title>
        <authorList>
            <person name="Eppinger M."/>
            <person name="Mammel M.K."/>
            <person name="Leclerc J.E."/>
            <person name="Ravel J."/>
            <person name="Cebula T.A."/>
        </authorList>
    </citation>
    <scope>NUCLEOTIDE SEQUENCE [LARGE SCALE GENOMIC DNA]</scope>
    <source>
        <strain>EC4115 / EHEC</strain>
    </source>
</reference>
<sequence>MYTSGYAHRSSSFSSAASKIARVSTENTTAGLISEVVYREDQPMMTQLLLLPLLQQLGQQSRWQLWLTPQQKLSREWVQASGLPLTKVMQISQLSPCHTVESMVRALRTGNYSVVIGWLADDLTEEEHAELVDAANEGNAMGFIMRPVSASSHATRQLSGLKIHSNLYH</sequence>
<name>SULA_ECO5E</name>